<sequence>MPTINQLVRNGRTDKVWKSKSPALNKGFNSLKKKSTDISAPQKRGVCTRVGTMTPKKPNSALRKYARVRLTNGIEVTAYIPGIGHNLQEHSVVLIRGGRVKDLPGVRYHIVRGALDTAGVDKRMQGRSKYGTKKPKAAKK</sequence>
<reference key="1">
    <citation type="submission" date="2009-02" db="EMBL/GenBank/DDBJ databases">
        <title>Genome sequence of Bacillus cereus 03BB102.</title>
        <authorList>
            <person name="Dodson R.J."/>
            <person name="Jackson P."/>
            <person name="Munk A.C."/>
            <person name="Brettin T."/>
            <person name="Bruce D."/>
            <person name="Detter C."/>
            <person name="Tapia R."/>
            <person name="Han C."/>
            <person name="Sutton G."/>
            <person name="Sims D."/>
        </authorList>
    </citation>
    <scope>NUCLEOTIDE SEQUENCE [LARGE SCALE GENOMIC DNA]</scope>
    <source>
        <strain>03BB102</strain>
    </source>
</reference>
<accession>C1ET34</accession>
<protein>
    <recommendedName>
        <fullName evidence="2">Small ribosomal subunit protein uS12</fullName>
    </recommendedName>
    <alternativeName>
        <fullName evidence="3">30S ribosomal protein S12</fullName>
    </alternativeName>
</protein>
<evidence type="ECO:0000250" key="1"/>
<evidence type="ECO:0000255" key="2">
    <source>
        <dbReference type="HAMAP-Rule" id="MF_00403"/>
    </source>
</evidence>
<evidence type="ECO:0000305" key="3"/>
<dbReference type="EMBL" id="CP001407">
    <property type="protein sequence ID" value="ACO26772.1"/>
    <property type="molecule type" value="Genomic_DNA"/>
</dbReference>
<dbReference type="RefSeq" id="WP_001142340.1">
    <property type="nucleotide sequence ID" value="NZ_CP009318.1"/>
</dbReference>
<dbReference type="SMR" id="C1ET34"/>
<dbReference type="GeneID" id="93010948"/>
<dbReference type="KEGG" id="bcx:BCA_0134"/>
<dbReference type="PATRIC" id="fig|572264.18.peg.169"/>
<dbReference type="Proteomes" id="UP000002210">
    <property type="component" value="Chromosome"/>
</dbReference>
<dbReference type="GO" id="GO:0015935">
    <property type="term" value="C:small ribosomal subunit"/>
    <property type="evidence" value="ECO:0007669"/>
    <property type="project" value="InterPro"/>
</dbReference>
<dbReference type="GO" id="GO:0019843">
    <property type="term" value="F:rRNA binding"/>
    <property type="evidence" value="ECO:0007669"/>
    <property type="project" value="UniProtKB-UniRule"/>
</dbReference>
<dbReference type="GO" id="GO:0003735">
    <property type="term" value="F:structural constituent of ribosome"/>
    <property type="evidence" value="ECO:0007669"/>
    <property type="project" value="InterPro"/>
</dbReference>
<dbReference type="GO" id="GO:0000049">
    <property type="term" value="F:tRNA binding"/>
    <property type="evidence" value="ECO:0007669"/>
    <property type="project" value="UniProtKB-UniRule"/>
</dbReference>
<dbReference type="GO" id="GO:0006412">
    <property type="term" value="P:translation"/>
    <property type="evidence" value="ECO:0007669"/>
    <property type="project" value="UniProtKB-UniRule"/>
</dbReference>
<dbReference type="CDD" id="cd03368">
    <property type="entry name" value="Ribosomal_S12"/>
    <property type="match status" value="1"/>
</dbReference>
<dbReference type="FunFam" id="2.40.50.140:FF:000001">
    <property type="entry name" value="30S ribosomal protein S12"/>
    <property type="match status" value="1"/>
</dbReference>
<dbReference type="Gene3D" id="2.40.50.140">
    <property type="entry name" value="Nucleic acid-binding proteins"/>
    <property type="match status" value="1"/>
</dbReference>
<dbReference type="HAMAP" id="MF_00403_B">
    <property type="entry name" value="Ribosomal_uS12_B"/>
    <property type="match status" value="1"/>
</dbReference>
<dbReference type="InterPro" id="IPR012340">
    <property type="entry name" value="NA-bd_OB-fold"/>
</dbReference>
<dbReference type="InterPro" id="IPR006032">
    <property type="entry name" value="Ribosomal_uS12"/>
</dbReference>
<dbReference type="InterPro" id="IPR005679">
    <property type="entry name" value="Ribosomal_uS12_bac"/>
</dbReference>
<dbReference type="NCBIfam" id="TIGR00981">
    <property type="entry name" value="rpsL_bact"/>
    <property type="match status" value="1"/>
</dbReference>
<dbReference type="PANTHER" id="PTHR11652">
    <property type="entry name" value="30S RIBOSOMAL PROTEIN S12 FAMILY MEMBER"/>
    <property type="match status" value="1"/>
</dbReference>
<dbReference type="Pfam" id="PF00164">
    <property type="entry name" value="Ribosom_S12_S23"/>
    <property type="match status" value="1"/>
</dbReference>
<dbReference type="PRINTS" id="PR01034">
    <property type="entry name" value="RIBOSOMALS12"/>
</dbReference>
<dbReference type="SUPFAM" id="SSF50249">
    <property type="entry name" value="Nucleic acid-binding proteins"/>
    <property type="match status" value="1"/>
</dbReference>
<dbReference type="PROSITE" id="PS00055">
    <property type="entry name" value="RIBOSOMAL_S12"/>
    <property type="match status" value="1"/>
</dbReference>
<gene>
    <name evidence="2" type="primary">rpsL</name>
    <name type="ordered locus">BCA_0134</name>
</gene>
<organism>
    <name type="scientific">Bacillus cereus (strain 03BB102)</name>
    <dbReference type="NCBI Taxonomy" id="572264"/>
    <lineage>
        <taxon>Bacteria</taxon>
        <taxon>Bacillati</taxon>
        <taxon>Bacillota</taxon>
        <taxon>Bacilli</taxon>
        <taxon>Bacillales</taxon>
        <taxon>Bacillaceae</taxon>
        <taxon>Bacillus</taxon>
        <taxon>Bacillus cereus group</taxon>
    </lineage>
</organism>
<name>RS12_BACC3</name>
<proteinExistence type="inferred from homology"/>
<keyword id="KW-0488">Methylation</keyword>
<keyword id="KW-0687">Ribonucleoprotein</keyword>
<keyword id="KW-0689">Ribosomal protein</keyword>
<keyword id="KW-0694">RNA-binding</keyword>
<keyword id="KW-0699">rRNA-binding</keyword>
<keyword id="KW-0820">tRNA-binding</keyword>
<comment type="function">
    <text evidence="2">With S4 and S5 plays an important role in translational accuracy.</text>
</comment>
<comment type="function">
    <text evidence="2">Interacts with and stabilizes bases of the 16S rRNA that are involved in tRNA selection in the A site and with the mRNA backbone. Located at the interface of the 30S and 50S subunits, it traverses the body of the 30S subunit contacting proteins on the other side and probably holding the rRNA structure together. The combined cluster of proteins S8, S12 and S17 appears to hold together the shoulder and platform of the 30S subunit.</text>
</comment>
<comment type="subunit">
    <text evidence="2">Part of the 30S ribosomal subunit. Contacts proteins S8 and S17. May interact with IF1 in the 30S initiation complex.</text>
</comment>
<comment type="similarity">
    <text evidence="2">Belongs to the universal ribosomal protein uS12 family.</text>
</comment>
<feature type="chain" id="PRO_1000194122" description="Small ribosomal subunit protein uS12">
    <location>
        <begin position="1"/>
        <end position="140"/>
    </location>
</feature>
<feature type="modified residue" description="3-methylthioaspartic acid" evidence="1">
    <location>
        <position position="102"/>
    </location>
</feature>